<keyword id="KW-0961">Cell wall biogenesis/degradation</keyword>
<keyword id="KW-0325">Glycoprotein</keyword>
<keyword id="KW-0328">Glycosyltransferase</keyword>
<keyword id="KW-0472">Membrane</keyword>
<keyword id="KW-1185">Reference proteome</keyword>
<keyword id="KW-0735">Signal-anchor</keyword>
<keyword id="KW-0808">Transferase</keyword>
<keyword id="KW-0812">Transmembrane</keyword>
<keyword id="KW-1133">Transmembrane helix</keyword>
<evidence type="ECO:0000250" key="1"/>
<evidence type="ECO:0000255" key="2"/>
<evidence type="ECO:0000269" key="3">
    <source>
    </source>
</evidence>
<evidence type="ECO:0000269" key="4">
    <source>
    </source>
</evidence>
<evidence type="ECO:0000305" key="5"/>
<sequence length="651" mass="75191">MKLEMSSYLHKVPNTGITNLSNSKSIVFIMFCATLLFIITSSRYLTGSESLGQIPSEIPKSSEQLNEELSQQINSKLHKLASFDKFNSFPLLNKHMKDDIYGLMTLETFTDPLPYLENYNEEEYSQQNYPICSEKLMFPSKIKLTKQQYLPADLQQFLGVLNNMRPYHDMVEKAKAYFISDLREEKKWFRFAGSSIWLPQFQCHYMVSRYLYSPNGVANHAFASFLYIQLFDSDWKELPSHTTLDIPFEQTEANSIFKIFKPKQKYANFRNSTYPQILPIPFDYKLPIETKKYYYGPEDPRILLRSNPLGFDEPLIVFNMKGLKLTKRVMYSYLPFSNTLKLLKKRREPFANIEKNWTPFKSVAQPSKTQTTIHFIYSMIPLEVLACDIDSGLCDILQKPAKHDFNYVGGLRGGTQLVSLPLNETIPSEIRAKLPIPKNRQVYIGWARTHLNNCGCGDSMYRPNFITLVEDYDDVTDKYYYKIGDISGYFDFAAKIEPWSKQVLDEEGNLYEKAEQCQGRNVLIPNSIAYWDVGSIKLAGTEYQKHDFKDMFSSGKVSDFNANEIVFNDYMGVTLSSADRDVSIVHVKGLLNYILQLPSLVDDSLVINKEWTFQKKGHDLNVRCAMIASKEYCKSYAIKQGVKIDEKSEET</sequence>
<organism>
    <name type="scientific">Candida albicans (strain SC5314 / ATCC MYA-2876)</name>
    <name type="common">Yeast</name>
    <dbReference type="NCBI Taxonomy" id="237561"/>
    <lineage>
        <taxon>Eukaryota</taxon>
        <taxon>Fungi</taxon>
        <taxon>Dikarya</taxon>
        <taxon>Ascomycota</taxon>
        <taxon>Saccharomycotina</taxon>
        <taxon>Pichiomycetes</taxon>
        <taxon>Debaryomycetaceae</taxon>
        <taxon>Candida/Lodderomyces clade</taxon>
        <taxon>Candida</taxon>
    </lineage>
</organism>
<gene>
    <name type="primary">BMT7</name>
    <name type="synonym">WRY8</name>
    <name type="ordered locus">CAALFM_C303450CA</name>
    <name type="ORF">CaO19.342</name>
    <name type="ORF">CaO19.7975</name>
</gene>
<accession>Q5AEC6</accession>
<accession>A0A1D8PJS0</accession>
<dbReference type="EC" id="2.4.1.-"/>
<dbReference type="EMBL" id="CP017625">
    <property type="protein sequence ID" value="AOW28373.1"/>
    <property type="molecule type" value="Genomic_DNA"/>
</dbReference>
<dbReference type="RefSeq" id="XP_720037.1">
    <property type="nucleotide sequence ID" value="XM_714944.1"/>
</dbReference>
<dbReference type="SMR" id="Q5AEC6"/>
<dbReference type="STRING" id="237561.Q5AEC6"/>
<dbReference type="CAZy" id="GT91">
    <property type="family name" value="Glycosyltransferase Family 91"/>
</dbReference>
<dbReference type="GlyCosmos" id="Q5AEC6">
    <property type="glycosylation" value="2 sites, No reported glycans"/>
</dbReference>
<dbReference type="EnsemblFungi" id="C3_03450C_A-T">
    <property type="protein sequence ID" value="C3_03450C_A-T-p1"/>
    <property type="gene ID" value="C3_03450C_A"/>
</dbReference>
<dbReference type="GeneID" id="3638357"/>
<dbReference type="KEGG" id="cal:CAALFM_C303450CA"/>
<dbReference type="CGD" id="CAL0000190174">
    <property type="gene designation" value="BMT7"/>
</dbReference>
<dbReference type="VEuPathDB" id="FungiDB:C3_03450C_A"/>
<dbReference type="eggNOG" id="ENOG502QTZG">
    <property type="taxonomic scope" value="Eukaryota"/>
</dbReference>
<dbReference type="HOGENOM" id="CLU_013841_3_1_1"/>
<dbReference type="InParanoid" id="Q5AEC6"/>
<dbReference type="OrthoDB" id="3631276at2759"/>
<dbReference type="PRO" id="PR:Q5AEC6"/>
<dbReference type="Proteomes" id="UP000000559">
    <property type="component" value="Chromosome 3"/>
</dbReference>
<dbReference type="GO" id="GO:0016020">
    <property type="term" value="C:membrane"/>
    <property type="evidence" value="ECO:0007669"/>
    <property type="project" value="UniProtKB-SubCell"/>
</dbReference>
<dbReference type="GO" id="GO:0000030">
    <property type="term" value="F:mannosyltransferase activity"/>
    <property type="evidence" value="ECO:0007669"/>
    <property type="project" value="InterPro"/>
</dbReference>
<dbReference type="GO" id="GO:0071555">
    <property type="term" value="P:cell wall organization"/>
    <property type="evidence" value="ECO:0007669"/>
    <property type="project" value="UniProtKB-KW"/>
</dbReference>
<dbReference type="InterPro" id="IPR021988">
    <property type="entry name" value="BMT1"/>
</dbReference>
<dbReference type="Pfam" id="PF12141">
    <property type="entry name" value="BMT"/>
    <property type="match status" value="2"/>
</dbReference>
<proteinExistence type="evidence at transcript level"/>
<protein>
    <recommendedName>
        <fullName>Beta-mannosyltransferase 7</fullName>
        <ecNumber>2.4.1.-</ecNumber>
    </recommendedName>
    <alternativeName>
        <fullName>WRY family protein 8</fullName>
    </alternativeName>
</protein>
<feature type="chain" id="PRO_0000426075" description="Beta-mannosyltransferase 7">
    <location>
        <begin position="1"/>
        <end position="651"/>
    </location>
</feature>
<feature type="topological domain" description="Cytoplasmic" evidence="2">
    <location>
        <begin position="1"/>
        <end position="19"/>
    </location>
</feature>
<feature type="transmembrane region" description="Helical" evidence="2">
    <location>
        <begin position="20"/>
        <end position="42"/>
    </location>
</feature>
<feature type="topological domain" description="Extracellular" evidence="2">
    <location>
        <begin position="43"/>
        <end position="651"/>
    </location>
</feature>
<feature type="glycosylation site" description="N-linked (GlcNAc...) asparagine" evidence="2">
    <location>
        <position position="271"/>
    </location>
</feature>
<feature type="glycosylation site" description="N-linked (GlcNAc...) asparagine" evidence="2">
    <location>
        <position position="423"/>
    </location>
</feature>
<name>BMT7_CANAL</name>
<reference key="1">
    <citation type="journal article" date="2004" name="Proc. Natl. Acad. Sci. U.S.A.">
        <title>The diploid genome sequence of Candida albicans.</title>
        <authorList>
            <person name="Jones T."/>
            <person name="Federspiel N.A."/>
            <person name="Chibana H."/>
            <person name="Dungan J."/>
            <person name="Kalman S."/>
            <person name="Magee B.B."/>
            <person name="Newport G."/>
            <person name="Thorstenson Y.R."/>
            <person name="Agabian N."/>
            <person name="Magee P.T."/>
            <person name="Davis R.W."/>
            <person name="Scherer S."/>
        </authorList>
    </citation>
    <scope>NUCLEOTIDE SEQUENCE [LARGE SCALE GENOMIC DNA]</scope>
    <source>
        <strain>SC5314 / ATCC MYA-2876</strain>
    </source>
</reference>
<reference key="2">
    <citation type="journal article" date="2007" name="Genome Biol.">
        <title>Assembly of the Candida albicans genome into sixteen supercontigs aligned on the eight chromosomes.</title>
        <authorList>
            <person name="van het Hoog M."/>
            <person name="Rast T.J."/>
            <person name="Martchenko M."/>
            <person name="Grindle S."/>
            <person name="Dignard D."/>
            <person name="Hogues H."/>
            <person name="Cuomo C."/>
            <person name="Berriman M."/>
            <person name="Scherer S."/>
            <person name="Magee B.B."/>
            <person name="Whiteway M."/>
            <person name="Chibana H."/>
            <person name="Nantel A."/>
            <person name="Magee P.T."/>
        </authorList>
    </citation>
    <scope>GENOME REANNOTATION</scope>
    <source>
        <strain>SC5314 / ATCC MYA-2876</strain>
    </source>
</reference>
<reference key="3">
    <citation type="journal article" date="2013" name="Genome Biol.">
        <title>Assembly of a phased diploid Candida albicans genome facilitates allele-specific measurements and provides a simple model for repeat and indel structure.</title>
        <authorList>
            <person name="Muzzey D."/>
            <person name="Schwartz K."/>
            <person name="Weissman J.S."/>
            <person name="Sherlock G."/>
        </authorList>
    </citation>
    <scope>NUCLEOTIDE SEQUENCE [LARGE SCALE GENOMIC DNA]</scope>
    <scope>GENOME REANNOTATION</scope>
    <source>
        <strain>SC5314 / ATCC MYA-2876</strain>
    </source>
</reference>
<reference key="4">
    <citation type="journal article" date="2004" name="Antimicrob. Agents Chemother.">
        <title>Comparison of gene expression profiles of Candida albicans azole-resistant clinical isolates and laboratory strains exposed to drugs inducing multidrug transporters.</title>
        <authorList>
            <person name="Karababa M."/>
            <person name="Coste A.T."/>
            <person name="Rognon B."/>
            <person name="Bille J."/>
            <person name="Sanglard D."/>
        </authorList>
    </citation>
    <scope>INDUCTION</scope>
</reference>
<reference key="5">
    <citation type="journal article" date="2008" name="J. Biol. Chem.">
        <title>Identification of a new family of genes involved in beta-1,2-mannosylation of glycans in Pichia pastoris and Candida albicans.</title>
        <authorList>
            <person name="Mille C."/>
            <person name="Bobrowicz P."/>
            <person name="Trinel P.A."/>
            <person name="Li H."/>
            <person name="Maes E."/>
            <person name="Guerardel Y."/>
            <person name="Fradin C."/>
            <person name="Martinez-Esparza M."/>
            <person name="Davidson R.C."/>
            <person name="Janbon G."/>
            <person name="Poulain D."/>
            <person name="Wildt S."/>
        </authorList>
    </citation>
    <scope>IDENTIFICATION</scope>
</reference>
<reference key="6">
    <citation type="journal article" date="2011" name="J. Biol. Chem.">
        <title>Cap2-HAP complex is a critical transcriptional regulator that has dual but contrasting roles in regulation of iron homeostasis in Candida albicans.</title>
        <authorList>
            <person name="Singh R.P."/>
            <person name="Prasad H.K."/>
            <person name="Sinha I."/>
            <person name="Agarwal N."/>
            <person name="Natarajan K."/>
        </authorList>
    </citation>
    <scope>INDUCTION</scope>
</reference>
<comment type="function">
    <text evidence="1">Beta-mannosyltransferase involved in cell wall biosynthesis through beta-1,2-mannosylation of cell wall phosphopeptidomannan.</text>
</comment>
<comment type="subcellular location">
    <subcellularLocation>
        <location evidence="5">Membrane</location>
        <topology evidence="5">Single-pass type II membrane protein</topology>
    </subcellularLocation>
</comment>
<comment type="induction">
    <text evidence="3 4">Expression is induced by HAP43 and down-regulated in an azole-resistant strain.</text>
</comment>
<comment type="similarity">
    <text evidence="5">Belongs to the BMT family.</text>
</comment>